<proteinExistence type="inferred from homology"/>
<organism>
    <name type="scientific">Nandina domestica</name>
    <name type="common">Heavenly bamboo</name>
    <dbReference type="NCBI Taxonomy" id="41776"/>
    <lineage>
        <taxon>Eukaryota</taxon>
        <taxon>Viridiplantae</taxon>
        <taxon>Streptophyta</taxon>
        <taxon>Embryophyta</taxon>
        <taxon>Tracheophyta</taxon>
        <taxon>Spermatophyta</taxon>
        <taxon>Magnoliopsida</taxon>
        <taxon>Ranunculales</taxon>
        <taxon>Berberidaceae</taxon>
        <taxon>Nandinoideae</taxon>
        <taxon>Nandineae</taxon>
        <taxon>Nandina</taxon>
    </lineage>
</organism>
<feature type="chain" id="PRO_0000326018" description="Photosystem I assembly protein Ycf4">
    <location>
        <begin position="1"/>
        <end position="184"/>
    </location>
</feature>
<feature type="transmembrane region" description="Helical" evidence="1">
    <location>
        <begin position="22"/>
        <end position="42"/>
    </location>
</feature>
<feature type="transmembrane region" description="Helical" evidence="1">
    <location>
        <begin position="57"/>
        <end position="77"/>
    </location>
</feature>
<sequence>MNWRSERIWIELITGSRKTSNFFWACILFLGSLGFLLVGTSSYLGRNLISLFPSQQILFFPQGIVMSFYGIAGLFISSYLWCTIWWNVGSGYDQFDRKEGIVCIFRWGFPGRNRRIFLRFLMRDIQSIRIEVKEGLYPRRVLYMEIRGQGALPLTRIDENLTPREIEQKAAELAYFLRVPIEVF</sequence>
<geneLocation type="chloroplast"/>
<dbReference type="EMBL" id="DQ923117">
    <property type="protein sequence ID" value="ABI49874.1"/>
    <property type="molecule type" value="Genomic_DNA"/>
</dbReference>
<dbReference type="RefSeq" id="YP_740661.1">
    <property type="nucleotide sequence ID" value="NC_008336.1"/>
</dbReference>
<dbReference type="GeneID" id="4271607"/>
<dbReference type="GO" id="GO:0009535">
    <property type="term" value="C:chloroplast thylakoid membrane"/>
    <property type="evidence" value="ECO:0007669"/>
    <property type="project" value="UniProtKB-SubCell"/>
</dbReference>
<dbReference type="GO" id="GO:0009522">
    <property type="term" value="C:photosystem I"/>
    <property type="evidence" value="ECO:0007669"/>
    <property type="project" value="InterPro"/>
</dbReference>
<dbReference type="GO" id="GO:0015979">
    <property type="term" value="P:photosynthesis"/>
    <property type="evidence" value="ECO:0007669"/>
    <property type="project" value="UniProtKB-UniRule"/>
</dbReference>
<dbReference type="HAMAP" id="MF_00437">
    <property type="entry name" value="Ycf4"/>
    <property type="match status" value="1"/>
</dbReference>
<dbReference type="InterPro" id="IPR003359">
    <property type="entry name" value="PSI_Ycf4_assembly"/>
</dbReference>
<dbReference type="PANTHER" id="PTHR33288">
    <property type="match status" value="1"/>
</dbReference>
<dbReference type="PANTHER" id="PTHR33288:SF4">
    <property type="entry name" value="PHOTOSYSTEM I ASSEMBLY PROTEIN YCF4"/>
    <property type="match status" value="1"/>
</dbReference>
<dbReference type="Pfam" id="PF02392">
    <property type="entry name" value="Ycf4"/>
    <property type="match status" value="1"/>
</dbReference>
<keyword id="KW-0150">Chloroplast</keyword>
<keyword id="KW-0472">Membrane</keyword>
<keyword id="KW-0602">Photosynthesis</keyword>
<keyword id="KW-0934">Plastid</keyword>
<keyword id="KW-0793">Thylakoid</keyword>
<keyword id="KW-0812">Transmembrane</keyword>
<keyword id="KW-1133">Transmembrane helix</keyword>
<comment type="function">
    <text evidence="1">Seems to be required for the assembly of the photosystem I complex.</text>
</comment>
<comment type="subcellular location">
    <subcellularLocation>
        <location evidence="1">Plastid</location>
        <location evidence="1">Chloroplast thylakoid membrane</location>
        <topology evidence="1">Multi-pass membrane protein</topology>
    </subcellularLocation>
</comment>
<comment type="similarity">
    <text evidence="1">Belongs to the Ycf4 family.</text>
</comment>
<gene>
    <name evidence="1" type="primary">ycf4</name>
</gene>
<name>YCF4_NANDO</name>
<reference key="1">
    <citation type="journal article" date="2006" name="BMC Plant Biol.">
        <title>Rapid and accurate pyrosequencing of angiosperm plastid genomes.</title>
        <authorList>
            <person name="Moore M.J."/>
            <person name="Dhingra A."/>
            <person name="Soltis P.S."/>
            <person name="Shaw R."/>
            <person name="Farmerie W.G."/>
            <person name="Folta K.M."/>
            <person name="Soltis D.E."/>
        </authorList>
    </citation>
    <scope>NUCLEOTIDE SEQUENCE [LARGE SCALE GENOMIC DNA]</scope>
</reference>
<protein>
    <recommendedName>
        <fullName evidence="1">Photosystem I assembly protein Ycf4</fullName>
    </recommendedName>
</protein>
<accession>Q09FV0</accession>
<evidence type="ECO:0000255" key="1">
    <source>
        <dbReference type="HAMAP-Rule" id="MF_00437"/>
    </source>
</evidence>